<evidence type="ECO:0000250" key="1"/>
<evidence type="ECO:0000305" key="2"/>
<feature type="chain" id="PRO_0000182750" description="Glutamate dehydrogenase A">
    <location>
        <begin position="1"/>
        <end position="411"/>
    </location>
</feature>
<feature type="active site" evidence="1">
    <location>
        <position position="102"/>
    </location>
</feature>
<reference key="1">
    <citation type="journal article" date="1999" name="Plant Cell Physiol.">
        <title>Isolation and characterization of two cDNA clones encoding for glutamate dehydrogenase in Nicotiana plumbaginifolia.</title>
        <authorList>
            <person name="Ficarelli A."/>
            <person name="Tassi F."/>
            <person name="Restivo F.M."/>
        </authorList>
    </citation>
    <scope>NUCLEOTIDE SEQUENCE [MRNA]</scope>
    <source>
        <tissue>Leaf</tissue>
    </source>
</reference>
<reference key="2">
    <citation type="submission" date="2000-05" db="EMBL/GenBank/DDBJ databases">
        <title>Genomic organisation of GDH genes in Nicotiana plumbaginifolia.</title>
        <authorList>
            <person name="Restivo F.M."/>
            <person name="Panizzi N."/>
            <person name="De Monte G."/>
            <person name="Ficarelli A."/>
        </authorList>
    </citation>
    <scope>NUCLEOTIDE SEQUENCE [GENOMIC DNA]</scope>
    <source>
        <tissue>Leaf</tissue>
    </source>
</reference>
<dbReference type="EC" id="1.4.1.3"/>
<dbReference type="EMBL" id="Y08292">
    <property type="protein sequence ID" value="CAA69600.1"/>
    <property type="molecule type" value="mRNA"/>
</dbReference>
<dbReference type="EMBL" id="AJ277949">
    <property type="protein sequence ID" value="CAB94836.1"/>
    <property type="molecule type" value="Genomic_DNA"/>
</dbReference>
<dbReference type="PIR" id="T16981">
    <property type="entry name" value="T16981"/>
</dbReference>
<dbReference type="SMR" id="O04937"/>
<dbReference type="BRENDA" id="1.4.1.3">
    <property type="organism ID" value="3640"/>
</dbReference>
<dbReference type="GO" id="GO:0005739">
    <property type="term" value="C:mitochondrion"/>
    <property type="evidence" value="ECO:0007669"/>
    <property type="project" value="TreeGrafter"/>
</dbReference>
<dbReference type="GO" id="GO:0004352">
    <property type="term" value="F:glutamate dehydrogenase (NAD+) activity"/>
    <property type="evidence" value="ECO:0007669"/>
    <property type="project" value="RHEA"/>
</dbReference>
<dbReference type="GO" id="GO:0004354">
    <property type="term" value="F:glutamate dehydrogenase (NADP+) activity"/>
    <property type="evidence" value="ECO:0007669"/>
    <property type="project" value="RHEA"/>
</dbReference>
<dbReference type="GO" id="GO:0006538">
    <property type="term" value="P:glutamate catabolic process"/>
    <property type="evidence" value="ECO:0007669"/>
    <property type="project" value="TreeGrafter"/>
</dbReference>
<dbReference type="CDD" id="cd01076">
    <property type="entry name" value="NAD_bind_1_Glu_DH"/>
    <property type="match status" value="1"/>
</dbReference>
<dbReference type="FunFam" id="3.40.50.10860:FF:000003">
    <property type="entry name" value="Glutamate dehydrogenase"/>
    <property type="match status" value="1"/>
</dbReference>
<dbReference type="FunFam" id="3.40.50.720:FF:000212">
    <property type="entry name" value="Glutamate dehydrogenase"/>
    <property type="match status" value="1"/>
</dbReference>
<dbReference type="Gene3D" id="3.40.50.10860">
    <property type="entry name" value="Leucine Dehydrogenase, chain A, domain 1"/>
    <property type="match status" value="1"/>
</dbReference>
<dbReference type="Gene3D" id="3.40.50.720">
    <property type="entry name" value="NAD(P)-binding Rossmann-like Domain"/>
    <property type="match status" value="1"/>
</dbReference>
<dbReference type="InterPro" id="IPR046346">
    <property type="entry name" value="Aminoacid_DH-like_N_sf"/>
</dbReference>
<dbReference type="InterPro" id="IPR006095">
    <property type="entry name" value="Glu/Leu/Phe/Val/Trp_DH"/>
</dbReference>
<dbReference type="InterPro" id="IPR006096">
    <property type="entry name" value="Glu/Leu/Phe/Val/Trp_DH_C"/>
</dbReference>
<dbReference type="InterPro" id="IPR006097">
    <property type="entry name" value="Glu/Leu/Phe/Val/Trp_DH_dimer"/>
</dbReference>
<dbReference type="InterPro" id="IPR014362">
    <property type="entry name" value="Glu_DH"/>
</dbReference>
<dbReference type="InterPro" id="IPR036291">
    <property type="entry name" value="NAD(P)-bd_dom_sf"/>
</dbReference>
<dbReference type="InterPro" id="IPR033922">
    <property type="entry name" value="NAD_bind_Glu_DH"/>
</dbReference>
<dbReference type="PANTHER" id="PTHR11606">
    <property type="entry name" value="GLUTAMATE DEHYDROGENASE"/>
    <property type="match status" value="1"/>
</dbReference>
<dbReference type="PANTHER" id="PTHR11606:SF24">
    <property type="entry name" value="NAD-SPECIFIC GLUTAMATE DEHYDROGENASE"/>
    <property type="match status" value="1"/>
</dbReference>
<dbReference type="Pfam" id="PF00208">
    <property type="entry name" value="ELFV_dehydrog"/>
    <property type="match status" value="1"/>
</dbReference>
<dbReference type="Pfam" id="PF02812">
    <property type="entry name" value="ELFV_dehydrog_N"/>
    <property type="match status" value="1"/>
</dbReference>
<dbReference type="PIRSF" id="PIRSF000185">
    <property type="entry name" value="Glu_DH"/>
    <property type="match status" value="1"/>
</dbReference>
<dbReference type="PRINTS" id="PR00082">
    <property type="entry name" value="GLFDHDRGNASE"/>
</dbReference>
<dbReference type="SMART" id="SM00839">
    <property type="entry name" value="ELFV_dehydrog"/>
    <property type="match status" value="1"/>
</dbReference>
<dbReference type="SUPFAM" id="SSF53223">
    <property type="entry name" value="Aminoacid dehydrogenase-like, N-terminal domain"/>
    <property type="match status" value="1"/>
</dbReference>
<dbReference type="SUPFAM" id="SSF51735">
    <property type="entry name" value="NAD(P)-binding Rossmann-fold domains"/>
    <property type="match status" value="1"/>
</dbReference>
<proteinExistence type="evidence at transcript level"/>
<organism>
    <name type="scientific">Nicotiana plumbaginifolia</name>
    <name type="common">Leadwort-leaved tobacco</name>
    <name type="synonym">Tex-Mex tobacco</name>
    <dbReference type="NCBI Taxonomy" id="4092"/>
    <lineage>
        <taxon>Eukaryota</taxon>
        <taxon>Viridiplantae</taxon>
        <taxon>Streptophyta</taxon>
        <taxon>Embryophyta</taxon>
        <taxon>Tracheophyta</taxon>
        <taxon>Spermatophyta</taxon>
        <taxon>Magnoliopsida</taxon>
        <taxon>eudicotyledons</taxon>
        <taxon>Gunneridae</taxon>
        <taxon>Pentapetalae</taxon>
        <taxon>asterids</taxon>
        <taxon>lamiids</taxon>
        <taxon>Solanales</taxon>
        <taxon>Solanaceae</taxon>
        <taxon>Nicotianoideae</taxon>
        <taxon>Nicotianeae</taxon>
        <taxon>Nicotiana</taxon>
    </lineage>
</organism>
<protein>
    <recommendedName>
        <fullName>Glutamate dehydrogenase A</fullName>
        <shortName>GDH A</shortName>
        <ecNumber>1.4.1.3</ecNumber>
    </recommendedName>
</protein>
<sequence length="411" mass="44796">MNALAATNRNFRQAARILGLDSKLEKSLLIPFREIKVECTIPKDDGTLVSYVGFRVQHDNARGPMKGGIRYHPEVDLDEVNALAQLMTWKTAVADIPYGGAKGGIGCKPKDLSKSELERLTRVFTQKIHDLIGINTDVPAPDMGTNAQTMAWILDEYSKFHGHSPAIVTGKPIDLGGSLGREAATGRGVVYATEALLAEYGKNIKDLTFAIQGFGNVGAWAAKLIHERGGKVIAVSDITGAVKNPNGLDIPALLNHKEATGKLIDFSGGDVMNSDEVLTHECDVLIPCALGGVLNRENADNVKAKFIIEAANHPTDPEADEILCKKGIVILPDIYANAGGVTVSYFEWVQNIQGFMWDEEKVNRELRKYMTKAFHNLKNMCQSHNCSLRMGAFTLGVNRVARATTLRGWEA</sequence>
<accession>O04937</accession>
<keyword id="KW-0520">NAD</keyword>
<keyword id="KW-0560">Oxidoreductase</keyword>
<name>DHEA_NICPL</name>
<comment type="catalytic activity">
    <reaction>
        <text>L-glutamate + NAD(+) + H2O = 2-oxoglutarate + NH4(+) + NADH + H(+)</text>
        <dbReference type="Rhea" id="RHEA:15133"/>
        <dbReference type="ChEBI" id="CHEBI:15377"/>
        <dbReference type="ChEBI" id="CHEBI:15378"/>
        <dbReference type="ChEBI" id="CHEBI:16810"/>
        <dbReference type="ChEBI" id="CHEBI:28938"/>
        <dbReference type="ChEBI" id="CHEBI:29985"/>
        <dbReference type="ChEBI" id="CHEBI:57540"/>
        <dbReference type="ChEBI" id="CHEBI:57945"/>
        <dbReference type="EC" id="1.4.1.3"/>
    </reaction>
</comment>
<comment type="catalytic activity">
    <reaction>
        <text>L-glutamate + NADP(+) + H2O = 2-oxoglutarate + NH4(+) + NADPH + H(+)</text>
        <dbReference type="Rhea" id="RHEA:11612"/>
        <dbReference type="ChEBI" id="CHEBI:15377"/>
        <dbReference type="ChEBI" id="CHEBI:15378"/>
        <dbReference type="ChEBI" id="CHEBI:16810"/>
        <dbReference type="ChEBI" id="CHEBI:28938"/>
        <dbReference type="ChEBI" id="CHEBI:29985"/>
        <dbReference type="ChEBI" id="CHEBI:57783"/>
        <dbReference type="ChEBI" id="CHEBI:58349"/>
        <dbReference type="EC" id="1.4.1.3"/>
    </reaction>
</comment>
<comment type="similarity">
    <text evidence="2">Belongs to the Glu/Leu/Phe/Val dehydrogenases family.</text>
</comment>
<gene>
    <name type="primary">GDHA</name>
</gene>